<accession>Q8LAL0</accession>
<accession>O65661</accession>
<comment type="function">
    <text evidence="1 3">Thought to play a role in cellular copper homeostasis, mitochondrial redox signaling or insertion of copper into the active site of COX (By similarity). Participates in copper and redox homeostasis.</text>
</comment>
<comment type="subcellular location">
    <subcellularLocation>
        <location evidence="1">Mitochondrion inner membrane</location>
        <topology evidence="1">Single-pass membrane protein</topology>
    </subcellularLocation>
</comment>
<comment type="tissue specificity">
    <text evidence="3">Expressed in the whole plant with highest expression in imbibed seeds and embryos, and the root hair zone.</text>
</comment>
<comment type="disruption phenotype">
    <text evidence="3">No visible phenotype.</text>
</comment>
<comment type="similarity">
    <text evidence="4">Belongs to the SCO1/2 family.</text>
</comment>
<comment type="sequence caution" evidence="4">
    <conflict type="erroneous gene model prediction">
        <sequence resource="EMBL-CDS" id="CAA18760"/>
    </conflict>
</comment>
<comment type="sequence caution" evidence="4">
    <conflict type="erroneous gene model prediction">
        <sequence resource="EMBL-CDS" id="CAB80637"/>
    </conflict>
</comment>
<organism>
    <name type="scientific">Arabidopsis thaliana</name>
    <name type="common">Mouse-ear cress</name>
    <dbReference type="NCBI Taxonomy" id="3702"/>
    <lineage>
        <taxon>Eukaryota</taxon>
        <taxon>Viridiplantae</taxon>
        <taxon>Streptophyta</taxon>
        <taxon>Embryophyta</taxon>
        <taxon>Tracheophyta</taxon>
        <taxon>Spermatophyta</taxon>
        <taxon>Magnoliopsida</taxon>
        <taxon>eudicotyledons</taxon>
        <taxon>Gunneridae</taxon>
        <taxon>Pentapetalae</taxon>
        <taxon>rosids</taxon>
        <taxon>malvids</taxon>
        <taxon>Brassicales</taxon>
        <taxon>Brassicaceae</taxon>
        <taxon>Camelineae</taxon>
        <taxon>Arabidopsis</taxon>
    </lineage>
</organism>
<keyword id="KW-0143">Chaperone</keyword>
<keyword id="KW-0472">Membrane</keyword>
<keyword id="KW-0496">Mitochondrion</keyword>
<keyword id="KW-0999">Mitochondrion inner membrane</keyword>
<keyword id="KW-1185">Reference proteome</keyword>
<keyword id="KW-0809">Transit peptide</keyword>
<keyword id="KW-0812">Transmembrane</keyword>
<keyword id="KW-1133">Transmembrane helix</keyword>
<reference key="1">
    <citation type="journal article" date="1999" name="Nature">
        <title>Sequence and analysis of chromosome 4 of the plant Arabidopsis thaliana.</title>
        <authorList>
            <person name="Mayer K.F.X."/>
            <person name="Schueller C."/>
            <person name="Wambutt R."/>
            <person name="Murphy G."/>
            <person name="Volckaert G."/>
            <person name="Pohl T."/>
            <person name="Duesterhoeft A."/>
            <person name="Stiekema W."/>
            <person name="Entian K.-D."/>
            <person name="Terryn N."/>
            <person name="Harris B."/>
            <person name="Ansorge W."/>
            <person name="Brandt P."/>
            <person name="Grivell L.A."/>
            <person name="Rieger M."/>
            <person name="Weichselgartner M."/>
            <person name="de Simone V."/>
            <person name="Obermaier B."/>
            <person name="Mache R."/>
            <person name="Mueller M."/>
            <person name="Kreis M."/>
            <person name="Delseny M."/>
            <person name="Puigdomenech P."/>
            <person name="Watson M."/>
            <person name="Schmidtheini T."/>
            <person name="Reichert B."/>
            <person name="Portetelle D."/>
            <person name="Perez-Alonso M."/>
            <person name="Boutry M."/>
            <person name="Bancroft I."/>
            <person name="Vos P."/>
            <person name="Hoheisel J."/>
            <person name="Zimmermann W."/>
            <person name="Wedler H."/>
            <person name="Ridley P."/>
            <person name="Langham S.-A."/>
            <person name="McCullagh B."/>
            <person name="Bilham L."/>
            <person name="Robben J."/>
            <person name="van der Schueren J."/>
            <person name="Grymonprez B."/>
            <person name="Chuang Y.-J."/>
            <person name="Vandenbussche F."/>
            <person name="Braeken M."/>
            <person name="Weltjens I."/>
            <person name="Voet M."/>
            <person name="Bastiaens I."/>
            <person name="Aert R."/>
            <person name="Defoor E."/>
            <person name="Weitzenegger T."/>
            <person name="Bothe G."/>
            <person name="Ramsperger U."/>
            <person name="Hilbert H."/>
            <person name="Braun M."/>
            <person name="Holzer E."/>
            <person name="Brandt A."/>
            <person name="Peters S."/>
            <person name="van Staveren M."/>
            <person name="Dirkse W."/>
            <person name="Mooijman P."/>
            <person name="Klein Lankhorst R."/>
            <person name="Rose M."/>
            <person name="Hauf J."/>
            <person name="Koetter P."/>
            <person name="Berneiser S."/>
            <person name="Hempel S."/>
            <person name="Feldpausch M."/>
            <person name="Lamberth S."/>
            <person name="Van den Daele H."/>
            <person name="De Keyser A."/>
            <person name="Buysshaert C."/>
            <person name="Gielen J."/>
            <person name="Villarroel R."/>
            <person name="De Clercq R."/>
            <person name="van Montagu M."/>
            <person name="Rogers J."/>
            <person name="Cronin A."/>
            <person name="Quail M.A."/>
            <person name="Bray-Allen S."/>
            <person name="Clark L."/>
            <person name="Doggett J."/>
            <person name="Hall S."/>
            <person name="Kay M."/>
            <person name="Lennard N."/>
            <person name="McLay K."/>
            <person name="Mayes R."/>
            <person name="Pettett A."/>
            <person name="Rajandream M.A."/>
            <person name="Lyne M."/>
            <person name="Benes V."/>
            <person name="Rechmann S."/>
            <person name="Borkova D."/>
            <person name="Bloecker H."/>
            <person name="Scharfe M."/>
            <person name="Grimm M."/>
            <person name="Loehnert T.-H."/>
            <person name="Dose S."/>
            <person name="de Haan M."/>
            <person name="Maarse A.C."/>
            <person name="Schaefer M."/>
            <person name="Mueller-Auer S."/>
            <person name="Gabel C."/>
            <person name="Fuchs M."/>
            <person name="Fartmann B."/>
            <person name="Granderath K."/>
            <person name="Dauner D."/>
            <person name="Herzl A."/>
            <person name="Neumann S."/>
            <person name="Argiriou A."/>
            <person name="Vitale D."/>
            <person name="Liguori R."/>
            <person name="Piravandi E."/>
            <person name="Massenet O."/>
            <person name="Quigley F."/>
            <person name="Clabauld G."/>
            <person name="Muendlein A."/>
            <person name="Felber R."/>
            <person name="Schnabl S."/>
            <person name="Hiller R."/>
            <person name="Schmidt W."/>
            <person name="Lecharny A."/>
            <person name="Aubourg S."/>
            <person name="Chefdor F."/>
            <person name="Cooke R."/>
            <person name="Berger C."/>
            <person name="Monfort A."/>
            <person name="Casacuberta E."/>
            <person name="Gibbons T."/>
            <person name="Weber N."/>
            <person name="Vandenbol M."/>
            <person name="Bargues M."/>
            <person name="Terol J."/>
            <person name="Torres A."/>
            <person name="Perez-Perez A."/>
            <person name="Purnelle B."/>
            <person name="Bent E."/>
            <person name="Johnson S."/>
            <person name="Tacon D."/>
            <person name="Jesse T."/>
            <person name="Heijnen L."/>
            <person name="Schwarz S."/>
            <person name="Scholler P."/>
            <person name="Heber S."/>
            <person name="Francs P."/>
            <person name="Bielke C."/>
            <person name="Frishman D."/>
            <person name="Haase D."/>
            <person name="Lemcke K."/>
            <person name="Mewes H.-W."/>
            <person name="Stocker S."/>
            <person name="Zaccaria P."/>
            <person name="Bevan M."/>
            <person name="Wilson R.K."/>
            <person name="de la Bastide M."/>
            <person name="Habermann K."/>
            <person name="Parnell L."/>
            <person name="Dedhia N."/>
            <person name="Gnoj L."/>
            <person name="Schutz K."/>
            <person name="Huang E."/>
            <person name="Spiegel L."/>
            <person name="Sekhon M."/>
            <person name="Murray J."/>
            <person name="Sheet P."/>
            <person name="Cordes M."/>
            <person name="Abu-Threideh J."/>
            <person name="Stoneking T."/>
            <person name="Kalicki J."/>
            <person name="Graves T."/>
            <person name="Harmon G."/>
            <person name="Edwards J."/>
            <person name="Latreille P."/>
            <person name="Courtney L."/>
            <person name="Cloud J."/>
            <person name="Abbott A."/>
            <person name="Scott K."/>
            <person name="Johnson D."/>
            <person name="Minx P."/>
            <person name="Bentley D."/>
            <person name="Fulton B."/>
            <person name="Miller N."/>
            <person name="Greco T."/>
            <person name="Kemp K."/>
            <person name="Kramer J."/>
            <person name="Fulton L."/>
            <person name="Mardis E."/>
            <person name="Dante M."/>
            <person name="Pepin K."/>
            <person name="Hillier L.W."/>
            <person name="Nelson J."/>
            <person name="Spieth J."/>
            <person name="Ryan E."/>
            <person name="Andrews S."/>
            <person name="Geisel C."/>
            <person name="Layman D."/>
            <person name="Du H."/>
            <person name="Ali J."/>
            <person name="Berghoff A."/>
            <person name="Jones K."/>
            <person name="Drone K."/>
            <person name="Cotton M."/>
            <person name="Joshu C."/>
            <person name="Antonoiu B."/>
            <person name="Zidanic M."/>
            <person name="Strong C."/>
            <person name="Sun H."/>
            <person name="Lamar B."/>
            <person name="Yordan C."/>
            <person name="Ma P."/>
            <person name="Zhong J."/>
            <person name="Preston R."/>
            <person name="Vil D."/>
            <person name="Shekher M."/>
            <person name="Matero A."/>
            <person name="Shah R."/>
            <person name="Swaby I.K."/>
            <person name="O'Shaughnessy A."/>
            <person name="Rodriguez M."/>
            <person name="Hoffman J."/>
            <person name="Till S."/>
            <person name="Granat S."/>
            <person name="Shohdy N."/>
            <person name="Hasegawa A."/>
            <person name="Hameed A."/>
            <person name="Lodhi M."/>
            <person name="Johnson A."/>
            <person name="Chen E."/>
            <person name="Marra M.A."/>
            <person name="Martienssen R."/>
            <person name="McCombie W.R."/>
        </authorList>
    </citation>
    <scope>NUCLEOTIDE SEQUENCE [LARGE SCALE GENOMIC DNA]</scope>
    <source>
        <strain>cv. Columbia</strain>
    </source>
</reference>
<reference key="2">
    <citation type="journal article" date="2017" name="Plant J.">
        <title>Araport11: a complete reannotation of the Arabidopsis thaliana reference genome.</title>
        <authorList>
            <person name="Cheng C.Y."/>
            <person name="Krishnakumar V."/>
            <person name="Chan A.P."/>
            <person name="Thibaud-Nissen F."/>
            <person name="Schobel S."/>
            <person name="Town C.D."/>
        </authorList>
    </citation>
    <scope>GENOME REANNOTATION</scope>
    <source>
        <strain>cv. Columbia</strain>
    </source>
</reference>
<reference key="3">
    <citation type="submission" date="2006-02" db="EMBL/GenBank/DDBJ databases">
        <title>Arabidopsis ORF clones.</title>
        <authorList>
            <person name="Shinn P."/>
            <person name="Chen H."/>
            <person name="Kim C.J."/>
            <person name="Ecker J.R."/>
        </authorList>
    </citation>
    <scope>NUCLEOTIDE SEQUENCE [LARGE SCALE MRNA]</scope>
    <source>
        <strain>cv. Columbia</strain>
    </source>
</reference>
<reference key="4">
    <citation type="submission" date="2002-03" db="EMBL/GenBank/DDBJ databases">
        <title>Full-length cDNA from Arabidopsis thaliana.</title>
        <authorList>
            <person name="Brover V.V."/>
            <person name="Troukhan M.E."/>
            <person name="Alexandrov N.A."/>
            <person name="Lu Y.-P."/>
            <person name="Flavell R.B."/>
            <person name="Feldmann K.A."/>
        </authorList>
    </citation>
    <scope>NUCLEOTIDE SEQUENCE [LARGE SCALE MRNA]</scope>
</reference>
<reference key="5">
    <citation type="journal article" date="2011" name="J. Exp. Bot.">
        <title>Plants contain two SCO proteins that are differentially involved in cytochrome c oxidase function and copper and redox homeostasis.</title>
        <authorList>
            <person name="Attallah C.V."/>
            <person name="Welchen E."/>
            <person name="Martin A.P."/>
            <person name="Spinelli S.V."/>
            <person name="Bonnard G."/>
            <person name="Palatnik J.F."/>
            <person name="Gonzalez D.H."/>
        </authorList>
    </citation>
    <scope>FUNCTION</scope>
    <scope>DISRUPTION PHENOTYPE</scope>
    <scope>TISSUE SPECIFICITY</scope>
</reference>
<name>SCO12_ARATH</name>
<gene>
    <name type="primary">HCC2</name>
    <name type="synonym">SCO1-2</name>
    <name type="ordered locus">At4g39740</name>
    <name type="ORF">T19P19.130</name>
</gene>
<feature type="transit peptide" description="Mitochondrion" evidence="2">
    <location>
        <begin position="1"/>
        <end position="14"/>
    </location>
</feature>
<feature type="chain" id="PRO_0000412568" description="Protein SCO1 homolog 2, mitochondrial">
    <location>
        <begin position="15"/>
        <end position="276"/>
    </location>
</feature>
<feature type="transmembrane region" description="Helical" evidence="2">
    <location>
        <begin position="66"/>
        <end position="82"/>
    </location>
</feature>
<feature type="domain" description="Thioredoxin">
    <location>
        <begin position="110"/>
        <end position="273"/>
    </location>
</feature>
<protein>
    <recommendedName>
        <fullName>Protein SCO1 homolog 2, mitochondrial</fullName>
    </recommendedName>
    <alternativeName>
        <fullName>Homolog of the copper chaperone SCO1 member 2</fullName>
        <shortName>HCC2</shortName>
    </alternativeName>
</protein>
<evidence type="ECO:0000250" key="1"/>
<evidence type="ECO:0000255" key="2"/>
<evidence type="ECO:0000269" key="3">
    <source>
    </source>
</evidence>
<evidence type="ECO:0000305" key="4"/>
<proteinExistence type="evidence at transcript level"/>
<sequence>MLPCRRLVLSCKNQAASFLRRCGPSKRIQSVNYCKSTRQGHEIPDVKPLFPTGGGTQAPSRSRARYAVPAILLGFAGFVGFLHYNDERRAVPRGQASSNSGCGCGSNTTVKGPIIGGPFTLVSTENKIVTENDFCGKWVLLYFGYSFSPDVGPEQLKMMSKAVDKLESKHNEKILPVFVTLDPQRDTPSHLHAYLKEFDSRILGLTGTASAMRQMAQEYRVYFKKVQEDGEDYLVDTSHNMYLINPKMEIVRCFGVEYNPDELSQELLKEVASVSQ</sequence>
<dbReference type="EMBL" id="AL022605">
    <property type="protein sequence ID" value="CAA18760.1"/>
    <property type="status" value="ALT_SEQ"/>
    <property type="molecule type" value="Genomic_DNA"/>
</dbReference>
<dbReference type="EMBL" id="AL161595">
    <property type="protein sequence ID" value="CAB80637.1"/>
    <property type="status" value="ALT_SEQ"/>
    <property type="molecule type" value="Genomic_DNA"/>
</dbReference>
<dbReference type="EMBL" id="CP002687">
    <property type="protein sequence ID" value="AEE87111.1"/>
    <property type="molecule type" value="Genomic_DNA"/>
</dbReference>
<dbReference type="EMBL" id="BT024500">
    <property type="protein sequence ID" value="ABD19681.1"/>
    <property type="molecule type" value="mRNA"/>
</dbReference>
<dbReference type="EMBL" id="AY087747">
    <property type="protein sequence ID" value="AAM65284.1"/>
    <property type="molecule type" value="mRNA"/>
</dbReference>
<dbReference type="PIR" id="T05011">
    <property type="entry name" value="T05011"/>
</dbReference>
<dbReference type="RefSeq" id="NP_568068.1">
    <property type="nucleotide sequence ID" value="NM_120135.5"/>
</dbReference>
<dbReference type="SMR" id="Q8LAL0"/>
<dbReference type="FunCoup" id="Q8LAL0">
    <property type="interactions" value="4"/>
</dbReference>
<dbReference type="STRING" id="3702.Q8LAL0"/>
<dbReference type="PaxDb" id="3702-AT4G39740.1"/>
<dbReference type="ProteomicsDB" id="232820"/>
<dbReference type="EnsemblPlants" id="AT4G39740.1">
    <property type="protein sequence ID" value="AT4G39740.1"/>
    <property type="gene ID" value="AT4G39740"/>
</dbReference>
<dbReference type="GeneID" id="830129"/>
<dbReference type="Gramene" id="AT4G39740.1">
    <property type="protein sequence ID" value="AT4G39740.1"/>
    <property type="gene ID" value="AT4G39740"/>
</dbReference>
<dbReference type="KEGG" id="ath:AT4G39740"/>
<dbReference type="Araport" id="AT4G39740"/>
<dbReference type="TAIR" id="AT4G39740">
    <property type="gene designation" value="HCC2"/>
</dbReference>
<dbReference type="eggNOG" id="KOG2792">
    <property type="taxonomic scope" value="Eukaryota"/>
</dbReference>
<dbReference type="HOGENOM" id="CLU_050131_0_4_1"/>
<dbReference type="InParanoid" id="Q8LAL0"/>
<dbReference type="OMA" id="PCRPRVF"/>
<dbReference type="OrthoDB" id="270009at2759"/>
<dbReference type="PhylomeDB" id="Q8LAL0"/>
<dbReference type="PRO" id="PR:Q8LAL0"/>
<dbReference type="Proteomes" id="UP000006548">
    <property type="component" value="Chromosome 4"/>
</dbReference>
<dbReference type="ExpressionAtlas" id="Q8LAL0">
    <property type="expression patterns" value="baseline and differential"/>
</dbReference>
<dbReference type="GO" id="GO:0005743">
    <property type="term" value="C:mitochondrial inner membrane"/>
    <property type="evidence" value="ECO:0007669"/>
    <property type="project" value="UniProtKB-SubCell"/>
</dbReference>
<dbReference type="GO" id="GO:0055070">
    <property type="term" value="P:copper ion homeostasis"/>
    <property type="evidence" value="ECO:0000315"/>
    <property type="project" value="UniProtKB"/>
</dbReference>
<dbReference type="CDD" id="cd02968">
    <property type="entry name" value="SCO"/>
    <property type="match status" value="1"/>
</dbReference>
<dbReference type="FunFam" id="3.40.30.10:FF:000013">
    <property type="entry name" value="Blast:Protein SCO1 homolog, mitochondrial"/>
    <property type="match status" value="1"/>
</dbReference>
<dbReference type="Gene3D" id="3.40.30.10">
    <property type="entry name" value="Glutaredoxin"/>
    <property type="match status" value="1"/>
</dbReference>
<dbReference type="InterPro" id="IPR003782">
    <property type="entry name" value="SCO1/SenC"/>
</dbReference>
<dbReference type="InterPro" id="IPR036249">
    <property type="entry name" value="Thioredoxin-like_sf"/>
</dbReference>
<dbReference type="PANTHER" id="PTHR12151">
    <property type="entry name" value="ELECTRON TRANSPORT PROTIN SCO1/SENC FAMILY MEMBER"/>
    <property type="match status" value="1"/>
</dbReference>
<dbReference type="PANTHER" id="PTHR12151:SF1">
    <property type="entry name" value="PROTEIN SCO1 HOMOLOG 2, MITOCHONDRIAL"/>
    <property type="match status" value="1"/>
</dbReference>
<dbReference type="Pfam" id="PF02630">
    <property type="entry name" value="SCO1-SenC"/>
    <property type="match status" value="1"/>
</dbReference>
<dbReference type="SUPFAM" id="SSF52833">
    <property type="entry name" value="Thioredoxin-like"/>
    <property type="match status" value="1"/>
</dbReference>